<keyword id="KW-0106">Calcium</keyword>
<keyword id="KW-0903">Direct protein sequencing</keyword>
<keyword id="KW-1015">Disulfide bond</keyword>
<keyword id="KW-0378">Hydrolase</keyword>
<keyword id="KW-0442">Lipid degradation</keyword>
<keyword id="KW-0443">Lipid metabolism</keyword>
<keyword id="KW-0479">Metal-binding</keyword>
<keyword id="KW-0964">Secreted</keyword>
<sequence>NLVQFSYLIQCANTGKRASYHYADYGCYCGAGGSGTPVDELDRCCKIHDNCYGQAEKMGCYPKLTMYNYYCGTQSPTCDNKTGCQRYVCACDLEAAKCFARSPYNNKNYNIDTSKRCK</sequence>
<accession>P00613</accession>
<proteinExistence type="evidence at protein level"/>
<comment type="function">
    <text evidence="1">PLA2 catalyzes the calcium-dependent hydrolysis of the 2-acyl groups in 3-sn-phosphoglycerides.</text>
</comment>
<comment type="catalytic activity">
    <reaction evidence="2 3">
        <text>a 1,2-diacyl-sn-glycero-3-phosphocholine + H2O = a 1-acyl-sn-glycero-3-phosphocholine + a fatty acid + H(+)</text>
        <dbReference type="Rhea" id="RHEA:15801"/>
        <dbReference type="ChEBI" id="CHEBI:15377"/>
        <dbReference type="ChEBI" id="CHEBI:15378"/>
        <dbReference type="ChEBI" id="CHEBI:28868"/>
        <dbReference type="ChEBI" id="CHEBI:57643"/>
        <dbReference type="ChEBI" id="CHEBI:58168"/>
        <dbReference type="EC" id="3.1.1.4"/>
    </reaction>
</comment>
<comment type="cofactor">
    <cofactor evidence="1">
        <name>Ca(2+)</name>
        <dbReference type="ChEBI" id="CHEBI:29108"/>
    </cofactor>
    <text evidence="1">Binds 1 Ca(2+) ion.</text>
</comment>
<comment type="subunit">
    <text evidence="4">Monomer.</text>
</comment>
<comment type="subcellular location">
    <subcellularLocation>
        <location>Secreted</location>
    </subcellularLocation>
</comment>
<comment type="tissue specificity">
    <text>Expressed by the venom gland.</text>
</comment>
<comment type="similarity">
    <text evidence="5">Belongs to the phospholipase A2 family. Group I subfamily. D49 sub-subfamily.</text>
</comment>
<reference key="1">
    <citation type="journal article" date="1982" name="Biochem. J.">
        <title>Amino acid sequences of three phospholipases A I, III and IV from the venom of the sea snake Laticauda semifasciata.</title>
        <authorList>
            <person name="Nishida S."/>
            <person name="Kim H.S."/>
            <person name="Tamiya N."/>
        </authorList>
    </citation>
    <scope>PROTEIN SEQUENCE</scope>
    <scope>SUBUNIT</scope>
    <source>
        <tissue>Venom</tissue>
    </source>
</reference>
<name>PA2B4_LATSE</name>
<evidence type="ECO:0000250" key="1"/>
<evidence type="ECO:0000255" key="2">
    <source>
        <dbReference type="PROSITE-ProRule" id="PRU10035"/>
    </source>
</evidence>
<evidence type="ECO:0000255" key="3">
    <source>
        <dbReference type="PROSITE-ProRule" id="PRU10036"/>
    </source>
</evidence>
<evidence type="ECO:0000269" key="4">
    <source>
    </source>
</evidence>
<evidence type="ECO:0000305" key="5"/>
<protein>
    <recommendedName>
        <fullName>Basic phospholipase A2 4</fullName>
        <shortName>svPLA2</shortName>
        <ecNumber>3.1.1.4</ecNumber>
    </recommendedName>
    <alternativeName>
        <fullName>Phosphatidylcholine 2-acylhydrolase</fullName>
    </alternativeName>
    <alternativeName>
        <fullName>Phospholipase A2 isozyme IV</fullName>
    </alternativeName>
</protein>
<dbReference type="EC" id="3.1.1.4"/>
<dbReference type="PIR" id="A90316">
    <property type="entry name" value="PSLT4E"/>
</dbReference>
<dbReference type="SMR" id="P00613"/>
<dbReference type="GO" id="GO:0005576">
    <property type="term" value="C:extracellular region"/>
    <property type="evidence" value="ECO:0007669"/>
    <property type="project" value="UniProtKB-SubCell"/>
</dbReference>
<dbReference type="GO" id="GO:0005509">
    <property type="term" value="F:calcium ion binding"/>
    <property type="evidence" value="ECO:0007669"/>
    <property type="project" value="InterPro"/>
</dbReference>
<dbReference type="GO" id="GO:0047498">
    <property type="term" value="F:calcium-dependent phospholipase A2 activity"/>
    <property type="evidence" value="ECO:0007669"/>
    <property type="project" value="TreeGrafter"/>
</dbReference>
<dbReference type="GO" id="GO:0005543">
    <property type="term" value="F:phospholipid binding"/>
    <property type="evidence" value="ECO:0007669"/>
    <property type="project" value="TreeGrafter"/>
</dbReference>
<dbReference type="GO" id="GO:0050482">
    <property type="term" value="P:arachidonate secretion"/>
    <property type="evidence" value="ECO:0007669"/>
    <property type="project" value="InterPro"/>
</dbReference>
<dbReference type="GO" id="GO:0016042">
    <property type="term" value="P:lipid catabolic process"/>
    <property type="evidence" value="ECO:0007669"/>
    <property type="project" value="UniProtKB-KW"/>
</dbReference>
<dbReference type="GO" id="GO:0006644">
    <property type="term" value="P:phospholipid metabolic process"/>
    <property type="evidence" value="ECO:0007669"/>
    <property type="project" value="InterPro"/>
</dbReference>
<dbReference type="CDD" id="cd00125">
    <property type="entry name" value="PLA2c"/>
    <property type="match status" value="1"/>
</dbReference>
<dbReference type="FunFam" id="1.20.90.10:FF:000007">
    <property type="entry name" value="Acidic phospholipase A2"/>
    <property type="match status" value="1"/>
</dbReference>
<dbReference type="Gene3D" id="1.20.90.10">
    <property type="entry name" value="Phospholipase A2 domain"/>
    <property type="match status" value="1"/>
</dbReference>
<dbReference type="InterPro" id="IPR001211">
    <property type="entry name" value="PLipase_A2"/>
</dbReference>
<dbReference type="InterPro" id="IPR033112">
    <property type="entry name" value="PLipase_A2_Asp_AS"/>
</dbReference>
<dbReference type="InterPro" id="IPR016090">
    <property type="entry name" value="PLipase_A2_dom"/>
</dbReference>
<dbReference type="InterPro" id="IPR036444">
    <property type="entry name" value="PLipase_A2_dom_sf"/>
</dbReference>
<dbReference type="InterPro" id="IPR033113">
    <property type="entry name" value="PLipase_A2_His_AS"/>
</dbReference>
<dbReference type="PANTHER" id="PTHR11716:SF100">
    <property type="entry name" value="PHOSPHOLIPASE A2"/>
    <property type="match status" value="1"/>
</dbReference>
<dbReference type="PANTHER" id="PTHR11716">
    <property type="entry name" value="PHOSPHOLIPASE A2 FAMILY MEMBER"/>
    <property type="match status" value="1"/>
</dbReference>
<dbReference type="Pfam" id="PF00068">
    <property type="entry name" value="Phospholip_A2_1"/>
    <property type="match status" value="1"/>
</dbReference>
<dbReference type="PRINTS" id="PR00389">
    <property type="entry name" value="PHPHLIPASEA2"/>
</dbReference>
<dbReference type="SMART" id="SM00085">
    <property type="entry name" value="PA2c"/>
    <property type="match status" value="1"/>
</dbReference>
<dbReference type="SUPFAM" id="SSF48619">
    <property type="entry name" value="Phospholipase A2, PLA2"/>
    <property type="match status" value="1"/>
</dbReference>
<dbReference type="PROSITE" id="PS00119">
    <property type="entry name" value="PA2_ASP"/>
    <property type="match status" value="1"/>
</dbReference>
<dbReference type="PROSITE" id="PS00118">
    <property type="entry name" value="PA2_HIS"/>
    <property type="match status" value="1"/>
</dbReference>
<organism>
    <name type="scientific">Laticauda semifasciata</name>
    <name type="common">Black-banded sea krait</name>
    <name type="synonym">Pseudolaticauda semifasciata</name>
    <dbReference type="NCBI Taxonomy" id="8631"/>
    <lineage>
        <taxon>Eukaryota</taxon>
        <taxon>Metazoa</taxon>
        <taxon>Chordata</taxon>
        <taxon>Craniata</taxon>
        <taxon>Vertebrata</taxon>
        <taxon>Euteleostomi</taxon>
        <taxon>Lepidosauria</taxon>
        <taxon>Squamata</taxon>
        <taxon>Bifurcata</taxon>
        <taxon>Unidentata</taxon>
        <taxon>Episquamata</taxon>
        <taxon>Toxicofera</taxon>
        <taxon>Serpentes</taxon>
        <taxon>Colubroidea</taxon>
        <taxon>Elapidae</taxon>
        <taxon>Laticaudinae</taxon>
        <taxon>Laticauda</taxon>
    </lineage>
</organism>
<feature type="chain" id="PRO_0000161654" description="Basic phospholipase A2 4">
    <location>
        <begin position="1"/>
        <end position="118"/>
    </location>
</feature>
<feature type="active site" evidence="1">
    <location>
        <position position="48"/>
    </location>
</feature>
<feature type="active site" evidence="1">
    <location>
        <position position="92"/>
    </location>
</feature>
<feature type="binding site" evidence="1">
    <location>
        <position position="28"/>
    </location>
    <ligand>
        <name>Ca(2+)</name>
        <dbReference type="ChEBI" id="CHEBI:29108"/>
    </ligand>
</feature>
<feature type="binding site" evidence="1">
    <location>
        <position position="30"/>
    </location>
    <ligand>
        <name>Ca(2+)</name>
        <dbReference type="ChEBI" id="CHEBI:29108"/>
    </ligand>
</feature>
<feature type="binding site" evidence="1">
    <location>
        <position position="32"/>
    </location>
    <ligand>
        <name>Ca(2+)</name>
        <dbReference type="ChEBI" id="CHEBI:29108"/>
    </ligand>
</feature>
<feature type="binding site" evidence="1">
    <location>
        <position position="49"/>
    </location>
    <ligand>
        <name>Ca(2+)</name>
        <dbReference type="ChEBI" id="CHEBI:29108"/>
    </ligand>
</feature>
<feature type="disulfide bond" evidence="1">
    <location>
        <begin position="11"/>
        <end position="71"/>
    </location>
</feature>
<feature type="disulfide bond" evidence="1">
    <location>
        <begin position="27"/>
        <end position="117"/>
    </location>
</feature>
<feature type="disulfide bond" evidence="1">
    <location>
        <begin position="29"/>
        <end position="45"/>
    </location>
</feature>
<feature type="disulfide bond" evidence="1">
    <location>
        <begin position="44"/>
        <end position="98"/>
    </location>
</feature>
<feature type="disulfide bond" evidence="1">
    <location>
        <begin position="51"/>
        <end position="91"/>
    </location>
</feature>
<feature type="disulfide bond" evidence="1">
    <location>
        <begin position="60"/>
        <end position="84"/>
    </location>
</feature>
<feature type="disulfide bond" evidence="1">
    <location>
        <begin position="78"/>
        <end position="89"/>
    </location>
</feature>